<comment type="function">
    <text evidence="1 6 14">Required for centrosome assembly and function (PubMed:12112146). Essential for the correct localization of several centrosomal proteins including CEP250, CETN3, PCNT and NEK2 (By similarity). Required to anchor microtubules to the centrosome (By similarity). Also involved in cilium biogenesis by recruiting the BBSome, a ciliary protein complex involved in cilium biogenesis, to the centriolar satellites (PubMed:27979967). Recruits the tubulin polyglutamylase complex (TPGC) to centriolar satellites (By similarity).</text>
</comment>
<comment type="subunit">
    <text evidence="1 10 11 12 13 14">Self-associates. Interacts with BBS4, BBS8, CETN3, HAP1, NDE1, NDEL1, MAP1LC3B, GABARAPAL2, and GABARAP. Interacts with CEP131; the interaction increases in response to ultraviolet light (UV) radiation. Associates with microtubule; association to microtubule is reduced in response to cellular stress, such as ultraviolet light (UV) radiation or heat shock, in a process that requires p38 MAP kinase signaling (By similarity). Interacts with C2CD3 (PubMed:24469809). Interacts with CFAP263 (By similarity). Interacts with SSX2IP (PubMed:24356449). Interacts with CCDC13 (By similarity). Interacts with CEP290 (PubMed:17705300). Interacts with PARD6A (By similarity). Interacts with KIAA0753/OFIP, CEP20/FOR20 and OFD1; the interaction with CEP20/FOR20 and OFD1 may be mediated by KIAA0753/OFIP (PubMed:26643951). Interacts with CCDC66 (By similarity). Interacts with CCDC61 (By similarity). Interacts with DZIP1; localizes DZIP1 and the associated BBSome to centriolar satellite (PubMed:27979967). Interacts with CSTPP1, TTLL1, TPGS1 and LRRC49 (By similarity). Interacts with CFAP53 (By similarity).</text>
</comment>
<comment type="interaction">
    <interactant intactId="EBI-4284371">
        <id>Q9R0L6</id>
    </interactant>
    <interactant intactId="EBI-1811999">
        <id>Q6A078</id>
        <label>Cep290</label>
    </interactant>
    <organismsDiffer>false</organismsDiffer>
    <experiments>4</experiments>
</comment>
<comment type="subcellular location">
    <subcellularLocation>
        <location evidence="2">Cytoplasm</location>
        <location evidence="2">Cytoskeleton</location>
    </subcellularLocation>
    <subcellularLocation>
        <location evidence="5 6 7">Cytoplasm</location>
        <location evidence="5 6 7">Cytoskeleton</location>
        <location evidence="5 6 7">Microtubule organizing center</location>
        <location evidence="5 6 7">Centrosome</location>
    </subcellularLocation>
    <subcellularLocation>
        <location evidence="7 8">Cytoplasmic granule</location>
    </subcellularLocation>
    <subcellularLocation>
        <location evidence="5 7 8">Cytoplasm</location>
        <location evidence="5 7 8">Cytoskeleton</location>
        <location evidence="5 7 8">Microtubule organizing center</location>
        <location evidence="5 7 8">Centrosome</location>
        <location evidence="5 7 8">Centriolar satellite</location>
    </subcellularLocation>
    <subcellularLocation>
        <location evidence="1">Cytoplasm</location>
        <location evidence="1">Cytoskeleton</location>
        <location evidence="1">Cilium basal body</location>
    </subcellularLocation>
    <text evidence="1">Recruitment to the centrosome requires microtubules and dynein. Displaced from centriolar satellites and centrosome in response to cellular stress, such as ultraviolet light (UV) radiation or heat shock, in a process that requires p38 MAP kinase signaling (By similarity). The majority of the protein dissociates from the centrosome during metaphase and subsequently localizes to the cleavage site in telophase.</text>
</comment>
<comment type="alternative products">
    <event type="alternative splicing"/>
    <isoform>
        <id>Q9R0L6-1</id>
        <name>1</name>
        <sequence type="displayed"/>
    </isoform>
    <isoform>
        <id>Q9R0L6-2</id>
        <name>2</name>
        <sequence type="described" ref="VSP_022612"/>
    </isoform>
</comment>
<comment type="tissue specificity">
    <text evidence="9">Expressed in the hippocampus and dentate gyrus, the columnar epithelial cells of bronchioles, the olfactory epithelium, the pericardium and the inner segment of the retina.</text>
</comment>
<comment type="developmental stage">
    <text evidence="6">Maternally derived during fertilization. Expressed in the pericardium of the developing embryo and in the epidermal layer surrounding the digits.</text>
</comment>
<comment type="PTM">
    <text evidence="1">Ubiquitinated. Undergoes monoubiquitination catalyzed by the E3 ubiquitin-protein ligase MIB1 in proliferating cells, preventing cilia formation. Monoubiquitination by MIB1 is inhibited in response to cellular stress, such as ultraviolet light (UV) radiation or heat shock, resulting in cilia formation initiation.</text>
</comment>
<comment type="PTM">
    <text evidence="1">Phosphorylated on multiple serine and threonine residues by DYRK3 during the G2-to-M transition, after the nuclear-envelope breakdown. Phosphorylation by DYRK3 promotes disassembly of pericentriolar material (By similarity). Phosphorylation at Ser-372 mediated by PLK4 is required to maintain the integrity of centriolar satellites (By similarity).</text>
</comment>
<comment type="similarity">
    <text evidence="18">Belongs to the PCM1 family.</text>
</comment>
<organism>
    <name type="scientific">Mus musculus</name>
    <name type="common">Mouse</name>
    <dbReference type="NCBI Taxonomy" id="10090"/>
    <lineage>
        <taxon>Eukaryota</taxon>
        <taxon>Metazoa</taxon>
        <taxon>Chordata</taxon>
        <taxon>Craniata</taxon>
        <taxon>Vertebrata</taxon>
        <taxon>Euteleostomi</taxon>
        <taxon>Mammalia</taxon>
        <taxon>Eutheria</taxon>
        <taxon>Euarchontoglires</taxon>
        <taxon>Glires</taxon>
        <taxon>Rodentia</taxon>
        <taxon>Myomorpha</taxon>
        <taxon>Muroidea</taxon>
        <taxon>Muridae</taxon>
        <taxon>Murinae</taxon>
        <taxon>Mus</taxon>
        <taxon>Mus</taxon>
    </lineage>
</organism>
<keyword id="KW-0007">Acetylation</keyword>
<keyword id="KW-0025">Alternative splicing</keyword>
<keyword id="KW-0966">Cell projection</keyword>
<keyword id="KW-0970">Cilium biogenesis/degradation</keyword>
<keyword id="KW-0175">Coiled coil</keyword>
<keyword id="KW-0963">Cytoplasm</keyword>
<keyword id="KW-0206">Cytoskeleton</keyword>
<keyword id="KW-0597">Phosphoprotein</keyword>
<keyword id="KW-1185">Reference proteome</keyword>
<keyword id="KW-0832">Ubl conjugation</keyword>
<sequence>MATGGGPFEEVMHDQDLPNWSNDSVDDRLNNMEWGGQQKKANRSSEKNKKKFGVASDKRVTNAISPESSPGVGRRRTKIPHTFPHSRYMTQMSVPEQAELEKLKQRINFSDLDQRSIGSDSQGRATAANNKRQLSENRKPFNFLPMQINTNKSKDATASLPKREMTTSAQCKELFASALSNDLLQNCQVSEEDGRGEPAMESSQIVSRLVQIRDYITKASSMREDLVEKNERSANVERLTHLIEHLKEQEKSYMKFLQKILARDPQQEPMEETENLKKQHDLLKRMLQQQEQLRALQGRQAALLALQHKAEQAIAVMDDSVVTETTGSLSGVSITSELNEELNDLIQRFHNQLRDSQPPAVPDNRRQAESLSLTREISQSRNPSVSEHLPDEKVQLFSKMRVLQEKKQKMDKLLGELHNLRDQHLNNSSFVPSTSLQRSGDKRSSTVALSAPVGFASAVNGEANSLISSVPCPATSLVSQNESENEGHLNPAEKLQKLNEVQKRLNELRELVHYYEQTSDMMTDAVNENTKDEETEESEYDSEHENSEPVTNIRNPQVASTWNEVNTNSNTQCGSNNRDGRPVNSNCEINNRSAANIRALNMPPLDCRYNREGEQRLHVAHGEDEEEEVEEEGVSGASLSSRRSSLVDEAPEDEEFEQKISRLMAAKEKLKQLQDLVAMVQDDDATQVVVPAASNLDDFYAAEEDIKQNSNNARENSNKIDTGVNEKTREKFYEAKLQQQQRELKQLQEERKKLIEIQEKIQAVQKACPDLQLSATSISSGPTKKYLPAITSTPTVNENDSSTSKCVIDPEDSSVVDNELWSDMRRHEMLREELRQRRKQLEALMAEHQRRQGLAETSSPVAISLRSDGSENLCTPQQSRTEKTMATWGGSTQCALDEEGDEDGYLSEGIVRTDEEEEEEQDASSNDNFPIYPPSMNQNSYNVKETKTRWKSNRPVSADGNYRPLAKTRQQNISMQRQENLRWVSELSYIEEKEQWQEQINQLKKQLDFSVNICQTLMQDQQTLSCLLQTLLTGPYSVLPSNVASPQVHLIMHQLNQCYTQLTWQQNNVQRLKQMLTELMRQQNQHPEKPRSKERGSSASHPSSPNLFCPFSFPTQPVNLFNLPGFTNFPSFAPGMNFSPLFPSNFGDFSQNVSTPTEQQQPLAQNPSGKTEYMAFPKPFESSSSLGAEKQRNQKQPEEEAENTKTPWLYDQEGGVEKPFFKTGFTESVEKATNSNRKNQPDTSRRRRQFDEESLESFSSMPDPIDPTTVTKTFKTRKASAQASLASKDKTPKSKSKKRNSTQLKSRVKNIGYESASVSSTCEPCKNRNRHSAQTEEPVQAKLFSRKNHEQLEKIIKYSRSAEISSETGSDFSMFEALRDTIYSEVATLISQNESRPHFLIELFHELQLLNTDYLRQRALYALQDIVSRHISESDEREGENVKPVNSGTWVASNSELTPSESLVTTDDETFEKNFERETHKVSEQNDADNVSVMSVSSNFEPFATDDLGNTVIHLDQALARMREYERMKTETESHSNMRCTCRVIEDEDGAAAAATVSNSEETPIIENHNSPQPISDVSAVPCPRIDTQQLDRQIKAIMKEVIPFLKEHMDEVCSSQLLTSVRRMVLTLTQQNDESKEFVKFFHKQLGSILQDSLAKFAGRKLKDCGEDLLVEISEVLFNELAFFKLMQDLDNNSIAVKQRCKRKIEAAGVRQSYAKEAKRILEGDHGSPAGEIDDEDKDKDETETVKQTQTSEVYDAKGPKNVRSDVSDQEEDEESERCPVSINLSKAESQALTNYGSGEDENEDEEMEDFEESPVDIQTSLQANTETTEENEHDSQILQHDLEKTPESTNVPSDQEPTSKNDQDSSPVKPCYLNILENEQQLNSATHKDSLTTTDSSKQPEPLPLPLAASETLVPRVKEVKSAQETPESSLAGSPDTESPVLVNDYEAESGNISQKSDEEDFVKVEDLPLKLTVYSEEELRKKMIEEEQKNHLSGEICEMQTEELAGNSQILKEPETVGAQSI</sequence>
<name>PCM1_MOUSE</name>
<proteinExistence type="evidence at protein level"/>
<gene>
    <name evidence="19" type="primary">Pcm1</name>
</gene>
<protein>
    <recommendedName>
        <fullName>Pericentriolar material 1 protein</fullName>
        <shortName>PCM-1</shortName>
        <shortName>mPCM-1</shortName>
    </recommendedName>
</protein>
<evidence type="ECO:0000250" key="1">
    <source>
        <dbReference type="UniProtKB" id="Q15154"/>
    </source>
</evidence>
<evidence type="ECO:0000250" key="2">
    <source>
        <dbReference type="UniProtKB" id="Q8AV28"/>
    </source>
</evidence>
<evidence type="ECO:0000255" key="3"/>
<evidence type="ECO:0000256" key="4">
    <source>
        <dbReference type="SAM" id="MobiDB-lite"/>
    </source>
</evidence>
<evidence type="ECO:0000269" key="5">
    <source>
    </source>
</evidence>
<evidence type="ECO:0000269" key="6">
    <source>
    </source>
</evidence>
<evidence type="ECO:0000269" key="7">
    <source>
    </source>
</evidence>
<evidence type="ECO:0000269" key="8">
    <source>
    </source>
</evidence>
<evidence type="ECO:0000269" key="9">
    <source>
    </source>
</evidence>
<evidence type="ECO:0000269" key="10">
    <source>
    </source>
</evidence>
<evidence type="ECO:0000269" key="11">
    <source>
    </source>
</evidence>
<evidence type="ECO:0000269" key="12">
    <source>
    </source>
</evidence>
<evidence type="ECO:0000269" key="13">
    <source>
    </source>
</evidence>
<evidence type="ECO:0000269" key="14">
    <source>
    </source>
</evidence>
<evidence type="ECO:0000303" key="15">
    <source>
    </source>
</evidence>
<evidence type="ECO:0000303" key="16">
    <source>
    </source>
</evidence>
<evidence type="ECO:0000303" key="17">
    <source ref="6"/>
</evidence>
<evidence type="ECO:0000305" key="18"/>
<evidence type="ECO:0000312" key="19">
    <source>
        <dbReference type="MGI" id="MGI:1277958"/>
    </source>
</evidence>
<evidence type="ECO:0007744" key="20">
    <source>
    </source>
</evidence>
<evidence type="ECO:0007744" key="21">
    <source>
    </source>
</evidence>
<evidence type="ECO:0007744" key="22">
    <source>
    </source>
</evidence>
<evidence type="ECO:0007744" key="23">
    <source>
    </source>
</evidence>
<evidence type="ECO:0007744" key="24">
    <source>
    </source>
</evidence>
<accession>Q9R0L6</accession>
<accession>E9QLK2</accession>
<accession>O70287</accession>
<accession>Q3URH6</accession>
<accession>Q7TMS7</accession>
<accession>Q8C9V2</accession>
<accession>Q91Y27</accession>
<accession>Q91Y28</accession>
<accession>Q91Y51</accession>
<accession>Q923L0</accession>
<accession>Q9CRK8</accession>
<accession>Q9CT57</accession>
<feature type="initiator methionine" description="Removed" evidence="1">
    <location>
        <position position="1"/>
    </location>
</feature>
<feature type="chain" id="PRO_0000274038" description="Pericentriolar material 1 protein">
    <location>
        <begin position="2"/>
        <end position="2025"/>
    </location>
</feature>
<feature type="region of interest" description="Disordered" evidence="4">
    <location>
        <begin position="1"/>
        <end position="91"/>
    </location>
</feature>
<feature type="region of interest" description="Mediates interaction with DZIP1" evidence="1">
    <location>
        <begin position="2"/>
        <end position="1458"/>
    </location>
</feature>
<feature type="region of interest" description="Disordered" evidence="4">
    <location>
        <begin position="111"/>
        <end position="140"/>
    </location>
</feature>
<feature type="region of interest" description="Disordered" evidence="4">
    <location>
        <begin position="354"/>
        <end position="390"/>
    </location>
</feature>
<feature type="region of interest" description="Disordered" evidence="4">
    <location>
        <begin position="528"/>
        <end position="553"/>
    </location>
</feature>
<feature type="region of interest" description="Disordered" evidence="4">
    <location>
        <begin position="565"/>
        <end position="586"/>
    </location>
</feature>
<feature type="region of interest" description="Disordered" evidence="4">
    <location>
        <begin position="620"/>
        <end position="654"/>
    </location>
</feature>
<feature type="region of interest" description="Disordered" evidence="4">
    <location>
        <begin position="866"/>
        <end position="885"/>
    </location>
</feature>
<feature type="region of interest" description="Disordered" evidence="4">
    <location>
        <begin position="913"/>
        <end position="940"/>
    </location>
</feature>
<feature type="region of interest" description="Disordered" evidence="4">
    <location>
        <begin position="1081"/>
        <end position="1105"/>
    </location>
</feature>
<feature type="region of interest" description="Disordered" evidence="4">
    <location>
        <begin position="1149"/>
        <end position="1213"/>
    </location>
</feature>
<feature type="region of interest" description="Disordered" evidence="4">
    <location>
        <begin position="1230"/>
        <end position="1310"/>
    </location>
</feature>
<feature type="region of interest" description="Disordered" evidence="4">
    <location>
        <begin position="1319"/>
        <end position="1338"/>
    </location>
</feature>
<feature type="region of interest" description="Disordered" evidence="4">
    <location>
        <begin position="1720"/>
        <end position="1943"/>
    </location>
</feature>
<feature type="coiled-coil region" evidence="3">
    <location>
        <begin position="218"/>
        <end position="301"/>
    </location>
</feature>
<feature type="coiled-coil region" evidence="3">
    <location>
        <begin position="399"/>
        <end position="426"/>
    </location>
</feature>
<feature type="coiled-coil region" evidence="3">
    <location>
        <begin position="492"/>
        <end position="518"/>
    </location>
</feature>
<feature type="coiled-coil region" evidence="3">
    <location>
        <begin position="652"/>
        <end position="772"/>
    </location>
</feature>
<feature type="coiled-coil region" evidence="3">
    <location>
        <begin position="822"/>
        <end position="856"/>
    </location>
</feature>
<feature type="coiled-coil region" evidence="3">
    <location>
        <begin position="985"/>
        <end position="1017"/>
    </location>
</feature>
<feature type="coiled-coil region" evidence="3">
    <location>
        <begin position="1061"/>
        <end position="1086"/>
    </location>
</feature>
<feature type="compositionally biased region" description="Polar residues" evidence="4">
    <location>
        <begin position="116"/>
        <end position="132"/>
    </location>
</feature>
<feature type="compositionally biased region" description="Polar residues" evidence="4">
    <location>
        <begin position="369"/>
        <end position="385"/>
    </location>
</feature>
<feature type="compositionally biased region" description="Acidic residues" evidence="4">
    <location>
        <begin position="531"/>
        <end position="540"/>
    </location>
</feature>
<feature type="compositionally biased region" description="Acidic residues" evidence="4">
    <location>
        <begin position="623"/>
        <end position="633"/>
    </location>
</feature>
<feature type="compositionally biased region" description="Low complexity" evidence="4">
    <location>
        <begin position="634"/>
        <end position="644"/>
    </location>
</feature>
<feature type="compositionally biased region" description="Polar residues" evidence="4">
    <location>
        <begin position="870"/>
        <end position="879"/>
    </location>
</feature>
<feature type="compositionally biased region" description="Basic and acidic residues" evidence="4">
    <location>
        <begin position="1086"/>
        <end position="1096"/>
    </location>
</feature>
<feature type="compositionally biased region" description="Polar residues" evidence="4">
    <location>
        <begin position="1149"/>
        <end position="1169"/>
    </location>
</feature>
<feature type="compositionally biased region" description="Basic and acidic residues" evidence="4">
    <location>
        <begin position="1189"/>
        <end position="1198"/>
    </location>
</feature>
<feature type="compositionally biased region" description="Polar residues" evidence="4">
    <location>
        <begin position="1268"/>
        <end position="1285"/>
    </location>
</feature>
<feature type="compositionally biased region" description="Basic and acidic residues" evidence="4">
    <location>
        <begin position="1756"/>
        <end position="1768"/>
    </location>
</feature>
<feature type="compositionally biased region" description="Polar residues" evidence="4">
    <location>
        <begin position="1784"/>
        <end position="1798"/>
    </location>
</feature>
<feature type="compositionally biased region" description="Acidic residues" evidence="4">
    <location>
        <begin position="1800"/>
        <end position="1816"/>
    </location>
</feature>
<feature type="compositionally biased region" description="Polar residues" evidence="4">
    <location>
        <begin position="1818"/>
        <end position="1828"/>
    </location>
</feature>
<feature type="compositionally biased region" description="Polar residues" evidence="4">
    <location>
        <begin position="1849"/>
        <end position="1858"/>
    </location>
</feature>
<feature type="compositionally biased region" description="Polar residues" evidence="4">
    <location>
        <begin position="1879"/>
        <end position="1901"/>
    </location>
</feature>
<feature type="compositionally biased region" description="Polar residues" evidence="4">
    <location>
        <begin position="1925"/>
        <end position="1934"/>
    </location>
</feature>
<feature type="modified residue" description="N-acetylalanine" evidence="1">
    <location>
        <position position="2"/>
    </location>
</feature>
<feature type="modified residue" description="Phosphoserine" evidence="20 21 22 23 24">
    <location>
        <position position="65"/>
    </location>
</feature>
<feature type="modified residue" description="Phosphoserine" evidence="24">
    <location>
        <position position="68"/>
    </location>
</feature>
<feature type="modified residue" description="Phosphoserine" evidence="21 24">
    <location>
        <position position="69"/>
    </location>
</feature>
<feature type="modified residue" description="Phosphoserine" evidence="1">
    <location>
        <position position="93"/>
    </location>
</feature>
<feature type="modified residue" description="Phosphoserine" evidence="24">
    <location>
        <position position="110"/>
    </location>
</feature>
<feature type="modified residue" description="Phosphoserine" evidence="24">
    <location>
        <position position="116"/>
    </location>
</feature>
<feature type="modified residue" description="Phosphoserine" evidence="24">
    <location>
        <position position="119"/>
    </location>
</feature>
<feature type="modified residue" description="Phosphoserine" evidence="1">
    <location>
        <position position="159"/>
    </location>
</feature>
<feature type="modified residue" description="Phosphoserine" evidence="1">
    <location>
        <position position="370"/>
    </location>
</feature>
<feature type="modified residue" description="Phosphoserine; by PLK4" evidence="1">
    <location>
        <position position="372"/>
    </location>
</feature>
<feature type="modified residue" description="Phosphoserine" evidence="1">
    <location>
        <position position="384"/>
    </location>
</feature>
<feature type="modified residue" description="N6-acetyllysine" evidence="1">
    <location>
        <position position="399"/>
    </location>
</feature>
<feature type="modified residue" description="Phosphoserine" evidence="1">
    <location>
        <position position="593"/>
    </location>
</feature>
<feature type="modified residue" description="Phosphoserine" evidence="21 24">
    <location>
        <position position="644"/>
    </location>
</feature>
<feature type="modified residue" description="Phosphothreonine" evidence="1">
    <location>
        <position position="857"/>
    </location>
</feature>
<feature type="modified residue" description="Phosphoserine" evidence="24">
    <location>
        <position position="859"/>
    </location>
</feature>
<feature type="modified residue" description="Phosphoserine" evidence="24">
    <location>
        <position position="864"/>
    </location>
</feature>
<feature type="modified residue" description="Phosphoserine" evidence="24">
    <location>
        <position position="867"/>
    </location>
</feature>
<feature type="modified residue" description="Phosphoserine" evidence="24">
    <location>
        <position position="870"/>
    </location>
</feature>
<feature type="modified residue" description="Phosphothreonine" evidence="24">
    <location>
        <position position="875"/>
    </location>
</feature>
<feature type="modified residue" description="Phosphoserine" evidence="1">
    <location>
        <position position="957"/>
    </location>
</feature>
<feature type="modified residue" description="Phosphoserine" evidence="1">
    <location>
        <position position="974"/>
    </location>
</feature>
<feature type="modified residue" description="Phosphoserine" evidence="1">
    <location>
        <position position="985"/>
    </location>
</feature>
<feature type="modified residue" description="Phosphoserine" evidence="1">
    <location>
        <position position="988"/>
    </location>
</feature>
<feature type="modified residue" description="Phosphoserine" evidence="1">
    <location>
        <position position="1182"/>
    </location>
</feature>
<feature type="modified residue" description="Phosphoserine" evidence="24">
    <location>
        <position position="1185"/>
    </location>
</feature>
<feature type="modified residue" description="Phosphoserine" evidence="1">
    <location>
        <position position="1228"/>
    </location>
</feature>
<feature type="modified residue" description="Phosphoserine" evidence="24">
    <location>
        <position position="1254"/>
    </location>
</feature>
<feature type="modified residue" description="Phosphoserine" evidence="24">
    <location>
        <position position="1257"/>
    </location>
</feature>
<feature type="modified residue" description="Phosphoserine" evidence="24">
    <location>
        <position position="1259"/>
    </location>
</feature>
<feature type="modified residue" description="Phosphoserine" evidence="24">
    <location>
        <position position="1260"/>
    </location>
</feature>
<feature type="modified residue" description="Phosphoserine" evidence="24">
    <location>
        <position position="1315"/>
    </location>
</feature>
<feature type="modified residue" description="Phosphoserine" evidence="24">
    <location>
        <position position="1317"/>
    </location>
</feature>
<feature type="modified residue" description="Phosphothreonine" evidence="1">
    <location>
        <position position="1466"/>
    </location>
</feature>
<feature type="modified residue" description="Phosphoserine" evidence="24">
    <location>
        <position position="1571"/>
    </location>
</feature>
<feature type="modified residue" description="Phosphoserine" evidence="1">
    <location>
        <position position="1695"/>
    </location>
</feature>
<feature type="modified residue" description="Phosphoserine" evidence="24">
    <location>
        <position position="1729"/>
    </location>
</feature>
<feature type="modified residue" description="Phosphoserine" evidence="20 21 24">
    <location>
        <position position="1766"/>
    </location>
</feature>
<feature type="modified residue" description="Phosphoserine" evidence="20 21 24">
    <location>
        <position position="1769"/>
    </location>
</feature>
<feature type="modified residue" description="Phosphoserine" evidence="24">
    <location>
        <position position="1777"/>
    </location>
</feature>
<feature type="modified residue" description="Phosphoserine" evidence="24">
    <location>
        <position position="1783"/>
    </location>
</feature>
<feature type="modified residue" description="Phosphoserine" evidence="1">
    <location>
        <position position="1959"/>
    </location>
</feature>
<feature type="modified residue" description="Phosphoserine" evidence="1">
    <location>
        <position position="1978"/>
    </location>
</feature>
<feature type="splice variant" id="VSP_022612" description="In isoform 2." evidence="15 16 17">
    <original>R</original>
    <variation>RENEEEDVRTVDSAVGSGSVAESTSLNADVQSEASDTTAR</variation>
    <location>
        <position position="263"/>
    </location>
</feature>
<feature type="sequence conflict" description="In Ref. 4; AAH53728." evidence="18" ref="4">
    <original>A</original>
    <variation>T</variation>
    <location>
        <position position="305"/>
    </location>
</feature>
<feature type="sequence conflict" description="In Ref. 4; AAH53728." evidence="18" ref="4">
    <original>Q</original>
    <variation>R</variation>
    <location>
        <position position="408"/>
    </location>
</feature>
<feature type="sequence conflict" description="In Ref. 6; AAK39513." evidence="18" ref="6">
    <original>V</original>
    <variation>I</variation>
    <location>
        <position position="1216"/>
    </location>
</feature>
<feature type="sequence conflict" description="In Ref. 6; AAK39513." evidence="18" ref="6">
    <original>N</original>
    <variation>S</variation>
    <location>
        <position position="1329"/>
    </location>
</feature>
<feature type="sequence conflict" description="In Ref. 1; BAA87861 and 6; AAK21980." evidence="18" ref="1 6">
    <original>I</original>
    <variation>V</variation>
    <location>
        <position position="1819"/>
    </location>
</feature>
<feature type="sequence conflict" description="In Ref. 5; BAC30604." evidence="18" ref="5">
    <original>ETVGAQSI</original>
    <variation>GKSYQF</variation>
    <location>
        <begin position="2018"/>
        <end position="2025"/>
    </location>
</feature>
<dbReference type="EMBL" id="AB029291">
    <property type="protein sequence ID" value="BAA87861.1"/>
    <property type="molecule type" value="mRNA"/>
</dbReference>
<dbReference type="EMBL" id="AC144926">
    <property type="status" value="NOT_ANNOTATED_CDS"/>
    <property type="molecule type" value="Genomic_DNA"/>
</dbReference>
<dbReference type="EMBL" id="AC156554">
    <property type="status" value="NOT_ANNOTATED_CDS"/>
    <property type="molecule type" value="Genomic_DNA"/>
</dbReference>
<dbReference type="EMBL" id="BC053728">
    <property type="protein sequence ID" value="AAH53728.1"/>
    <property type="molecule type" value="mRNA"/>
</dbReference>
<dbReference type="EMBL" id="AK011147">
    <property type="protein sequence ID" value="BAB27430.3"/>
    <property type="molecule type" value="mRNA"/>
</dbReference>
<dbReference type="EMBL" id="AK040482">
    <property type="protein sequence ID" value="BAC30604.1"/>
    <property type="molecule type" value="mRNA"/>
</dbReference>
<dbReference type="EMBL" id="AK141516">
    <property type="protein sequence ID" value="BAE24712.1"/>
    <property type="molecule type" value="mRNA"/>
</dbReference>
<dbReference type="EMBL" id="AY028080">
    <property type="protein sequence ID" value="AAK21980.1"/>
    <property type="molecule type" value="Genomic_DNA"/>
</dbReference>
<dbReference type="EMBL" id="AF352180">
    <property type="protein sequence ID" value="AAK39513.1"/>
    <property type="molecule type" value="mRNA"/>
</dbReference>
<dbReference type="EMBL" id="AF369838">
    <property type="protein sequence ID" value="AAK39564.1"/>
    <property type="molecule type" value="mRNA"/>
</dbReference>
<dbReference type="EMBL" id="AF369839">
    <property type="protein sequence ID" value="AAK39565.1"/>
    <property type="molecule type" value="mRNA"/>
</dbReference>
<dbReference type="EMBL" id="AF039021">
    <property type="protein sequence ID" value="AAC96068.1"/>
    <property type="molecule type" value="Genomic_DNA"/>
</dbReference>
<dbReference type="EMBL" id="AK020493">
    <property type="protein sequence ID" value="BAB32121.1"/>
    <property type="molecule type" value="mRNA"/>
</dbReference>
<dbReference type="CCDS" id="CCDS22261.1">
    <molecule id="Q9R0L6-1"/>
</dbReference>
<dbReference type="RefSeq" id="NP_001390746.1">
    <molecule id="Q9R0L6-2"/>
    <property type="nucleotide sequence ID" value="NM_001403817.1"/>
</dbReference>
<dbReference type="RefSeq" id="NP_076151.2">
    <molecule id="Q9R0L6-1"/>
    <property type="nucleotide sequence ID" value="NM_023662.4"/>
</dbReference>
<dbReference type="RefSeq" id="XP_006509361.1">
    <property type="nucleotide sequence ID" value="XM_006509298.2"/>
</dbReference>
<dbReference type="SMR" id="Q9R0L6"/>
<dbReference type="BioGRID" id="202047">
    <property type="interactions" value="37"/>
</dbReference>
<dbReference type="FunCoup" id="Q9R0L6">
    <property type="interactions" value="3661"/>
</dbReference>
<dbReference type="IntAct" id="Q9R0L6">
    <property type="interactions" value="25"/>
</dbReference>
<dbReference type="MINT" id="Q9R0L6"/>
<dbReference type="STRING" id="10090.ENSMUSP00000039709"/>
<dbReference type="GlyGen" id="Q9R0L6">
    <property type="glycosylation" value="12 sites, 2 N-linked glycans (2 sites), 1 O-linked glycan (10 sites)"/>
</dbReference>
<dbReference type="iPTMnet" id="Q9R0L6"/>
<dbReference type="PhosphoSitePlus" id="Q9R0L6"/>
<dbReference type="SwissPalm" id="Q9R0L6"/>
<dbReference type="jPOST" id="Q9R0L6"/>
<dbReference type="PaxDb" id="10090-ENSMUSP00000039709"/>
<dbReference type="PeptideAtlas" id="Q9R0L6"/>
<dbReference type="ProteomicsDB" id="287998">
    <molecule id="Q9R0L6-1"/>
</dbReference>
<dbReference type="ProteomicsDB" id="287999">
    <molecule id="Q9R0L6-2"/>
</dbReference>
<dbReference type="Pumba" id="Q9R0L6"/>
<dbReference type="Antibodypedia" id="5155">
    <property type="antibodies" value="221 antibodies from 32 providers"/>
</dbReference>
<dbReference type="DNASU" id="18536"/>
<dbReference type="Ensembl" id="ENSMUST00000045218.9">
    <molecule id="Q9R0L6-1"/>
    <property type="protein sequence ID" value="ENSMUSP00000039709.8"/>
    <property type="gene ID" value="ENSMUSG00000031592.11"/>
</dbReference>
<dbReference type="Ensembl" id="ENSMUST00000211247.2">
    <molecule id="Q9R0L6-2"/>
    <property type="protein sequence ID" value="ENSMUSP00000147887.2"/>
    <property type="gene ID" value="ENSMUSG00000031592.11"/>
</dbReference>
<dbReference type="GeneID" id="18536"/>
<dbReference type="KEGG" id="mmu:18536"/>
<dbReference type="UCSC" id="uc009lnr.2">
    <molecule id="Q9R0L6-1"/>
    <property type="organism name" value="mouse"/>
</dbReference>
<dbReference type="UCSC" id="uc009lns.1">
    <molecule id="Q9R0L6-2"/>
    <property type="organism name" value="mouse"/>
</dbReference>
<dbReference type="AGR" id="MGI:1277958"/>
<dbReference type="CTD" id="5108"/>
<dbReference type="MGI" id="MGI:1277958">
    <property type="gene designation" value="Pcm1"/>
</dbReference>
<dbReference type="VEuPathDB" id="HostDB:ENSMUSG00000031592"/>
<dbReference type="eggNOG" id="ENOG502QRMF">
    <property type="taxonomic scope" value="Eukaryota"/>
</dbReference>
<dbReference type="GeneTree" id="ENSGT00390000006641"/>
<dbReference type="HOGENOM" id="CLU_002145_0_0_1"/>
<dbReference type="InParanoid" id="Q9R0L6"/>
<dbReference type="OMA" id="DDXNTVI"/>
<dbReference type="TreeFam" id="TF328740"/>
<dbReference type="Reactome" id="R-MMU-2565942">
    <property type="pathway name" value="Regulation of PLK1 Activity at G2/M Transition"/>
</dbReference>
<dbReference type="Reactome" id="R-MMU-380259">
    <property type="pathway name" value="Loss of Nlp from mitotic centrosomes"/>
</dbReference>
<dbReference type="Reactome" id="R-MMU-380270">
    <property type="pathway name" value="Recruitment of mitotic centrosome proteins and complexes"/>
</dbReference>
<dbReference type="Reactome" id="R-MMU-380284">
    <property type="pathway name" value="Loss of proteins required for interphase microtubule organization from the centrosome"/>
</dbReference>
<dbReference type="Reactome" id="R-MMU-380320">
    <property type="pathway name" value="Recruitment of NuMA to mitotic centrosomes"/>
</dbReference>
<dbReference type="Reactome" id="R-MMU-5620912">
    <property type="pathway name" value="Anchoring of the basal body to the plasma membrane"/>
</dbReference>
<dbReference type="Reactome" id="R-MMU-8854518">
    <property type="pathway name" value="AURKA Activation by TPX2"/>
</dbReference>
<dbReference type="BioGRID-ORCS" id="18536">
    <property type="hits" value="1 hit in 77 CRISPR screens"/>
</dbReference>
<dbReference type="CD-CODE" id="01CA17F3">
    <property type="entry name" value="Centrosome"/>
</dbReference>
<dbReference type="ChiTaRS" id="Pcm1">
    <property type="organism name" value="mouse"/>
</dbReference>
<dbReference type="PRO" id="PR:Q9R0L6"/>
<dbReference type="Proteomes" id="UP000000589">
    <property type="component" value="Chromosome 8"/>
</dbReference>
<dbReference type="RNAct" id="Q9R0L6">
    <property type="molecule type" value="protein"/>
</dbReference>
<dbReference type="Bgee" id="ENSMUSG00000031592">
    <property type="expression patterns" value="Expressed in spermatocyte and 256 other cell types or tissues"/>
</dbReference>
<dbReference type="ExpressionAtlas" id="Q9R0L6">
    <property type="expression patterns" value="baseline and differential"/>
</dbReference>
<dbReference type="GO" id="GO:0045177">
    <property type="term" value="C:apical part of cell"/>
    <property type="evidence" value="ECO:0000314"/>
    <property type="project" value="MGI"/>
</dbReference>
<dbReference type="GO" id="GO:0034451">
    <property type="term" value="C:centriolar satellite"/>
    <property type="evidence" value="ECO:0000314"/>
    <property type="project" value="BHF-UCL"/>
</dbReference>
<dbReference type="GO" id="GO:0005814">
    <property type="term" value="C:centriole"/>
    <property type="evidence" value="ECO:0000314"/>
    <property type="project" value="MGI"/>
</dbReference>
<dbReference type="GO" id="GO:0005813">
    <property type="term" value="C:centrosome"/>
    <property type="evidence" value="ECO:0000314"/>
    <property type="project" value="BHF-UCL"/>
</dbReference>
<dbReference type="GO" id="GO:0036064">
    <property type="term" value="C:ciliary basal body"/>
    <property type="evidence" value="ECO:0000314"/>
    <property type="project" value="MGI"/>
</dbReference>
<dbReference type="GO" id="GO:0035869">
    <property type="term" value="C:ciliary transition zone"/>
    <property type="evidence" value="ECO:0007669"/>
    <property type="project" value="Ensembl"/>
</dbReference>
<dbReference type="GO" id="GO:0005737">
    <property type="term" value="C:cytoplasm"/>
    <property type="evidence" value="ECO:0000314"/>
    <property type="project" value="BHF-UCL"/>
</dbReference>
<dbReference type="GO" id="GO:0005829">
    <property type="term" value="C:cytosol"/>
    <property type="evidence" value="ECO:0007669"/>
    <property type="project" value="Ensembl"/>
</dbReference>
<dbReference type="GO" id="GO:0031965">
    <property type="term" value="C:nuclear membrane"/>
    <property type="evidence" value="ECO:0007669"/>
    <property type="project" value="Ensembl"/>
</dbReference>
<dbReference type="GO" id="GO:0005654">
    <property type="term" value="C:nucleoplasm"/>
    <property type="evidence" value="ECO:0007669"/>
    <property type="project" value="Ensembl"/>
</dbReference>
<dbReference type="GO" id="GO:0000242">
    <property type="term" value="C:pericentriolar material"/>
    <property type="evidence" value="ECO:0000314"/>
    <property type="project" value="BHF-UCL"/>
</dbReference>
<dbReference type="GO" id="GO:0032991">
    <property type="term" value="C:protein-containing complex"/>
    <property type="evidence" value="ECO:0000266"/>
    <property type="project" value="MGI"/>
</dbReference>
<dbReference type="GO" id="GO:0060090">
    <property type="term" value="F:molecular adaptor activity"/>
    <property type="evidence" value="ECO:0007669"/>
    <property type="project" value="Ensembl"/>
</dbReference>
<dbReference type="GO" id="GO:0007098">
    <property type="term" value="P:centrosome cycle"/>
    <property type="evidence" value="ECO:0007669"/>
    <property type="project" value="Ensembl"/>
</dbReference>
<dbReference type="GO" id="GO:0060271">
    <property type="term" value="P:cilium assembly"/>
    <property type="evidence" value="ECO:0000250"/>
    <property type="project" value="UniProtKB"/>
</dbReference>
<dbReference type="GO" id="GO:0031122">
    <property type="term" value="P:cytoplasmic microtubule organization"/>
    <property type="evidence" value="ECO:0007669"/>
    <property type="project" value="Ensembl"/>
</dbReference>
<dbReference type="GO" id="GO:0022027">
    <property type="term" value="P:interkinetic nuclear migration"/>
    <property type="evidence" value="ECO:0000315"/>
    <property type="project" value="BHF-UCL"/>
</dbReference>
<dbReference type="GO" id="GO:0035735">
    <property type="term" value="P:intraciliary transport involved in cilium assembly"/>
    <property type="evidence" value="ECO:0000250"/>
    <property type="project" value="UniProtKB"/>
</dbReference>
<dbReference type="GO" id="GO:0034453">
    <property type="term" value="P:microtubule anchoring"/>
    <property type="evidence" value="ECO:0000315"/>
    <property type="project" value="BHF-UCL"/>
</dbReference>
<dbReference type="GO" id="GO:0034454">
    <property type="term" value="P:microtubule anchoring at centrosome"/>
    <property type="evidence" value="ECO:0000315"/>
    <property type="project" value="MGI"/>
</dbReference>
<dbReference type="GO" id="GO:0050768">
    <property type="term" value="P:negative regulation of neurogenesis"/>
    <property type="evidence" value="ECO:0000315"/>
    <property type="project" value="BHF-UCL"/>
</dbReference>
<dbReference type="GO" id="GO:0001764">
    <property type="term" value="P:neuron migration"/>
    <property type="evidence" value="ECO:0000315"/>
    <property type="project" value="MGI"/>
</dbReference>
<dbReference type="GO" id="GO:0097150">
    <property type="term" value="P:neuronal stem cell population maintenance"/>
    <property type="evidence" value="ECO:0000315"/>
    <property type="project" value="MGI"/>
</dbReference>
<dbReference type="GO" id="GO:1905515">
    <property type="term" value="P:non-motile cilium assembly"/>
    <property type="evidence" value="ECO:0007669"/>
    <property type="project" value="Ensembl"/>
</dbReference>
<dbReference type="GO" id="GO:0090316">
    <property type="term" value="P:positive regulation of intracellular protein transport"/>
    <property type="evidence" value="ECO:0000250"/>
    <property type="project" value="UniProtKB"/>
</dbReference>
<dbReference type="GO" id="GO:0071539">
    <property type="term" value="P:protein localization to centrosome"/>
    <property type="evidence" value="ECO:0000315"/>
    <property type="project" value="BHF-UCL"/>
</dbReference>
<dbReference type="GO" id="GO:0033365">
    <property type="term" value="P:protein localization to organelle"/>
    <property type="evidence" value="ECO:0000315"/>
    <property type="project" value="MGI"/>
</dbReference>
<dbReference type="GO" id="GO:0140706">
    <property type="term" value="P:protein-containing complex localization to centriolar satellite"/>
    <property type="evidence" value="ECO:0007669"/>
    <property type="project" value="Ensembl"/>
</dbReference>
<dbReference type="GO" id="GO:0061635">
    <property type="term" value="P:regulation of protein complex stability"/>
    <property type="evidence" value="ECO:0007669"/>
    <property type="project" value="Ensembl"/>
</dbReference>
<dbReference type="GO" id="GO:0035176">
    <property type="term" value="P:social behavior"/>
    <property type="evidence" value="ECO:0000315"/>
    <property type="project" value="MGI"/>
</dbReference>
<dbReference type="InterPro" id="IPR031446">
    <property type="entry name" value="PCM1_C"/>
</dbReference>
<dbReference type="InterPro" id="IPR024138">
    <property type="entry name" value="Pericentriolar_Pcm1"/>
</dbReference>
<dbReference type="PANTHER" id="PTHR14164:SF12">
    <property type="entry name" value="PERICENTRIOLAR MATERIAL 1 PROTEIN"/>
    <property type="match status" value="1"/>
</dbReference>
<dbReference type="PANTHER" id="PTHR14164">
    <property type="entry name" value="PERICENTRIOLAR MATERIAL 1-RELATED"/>
    <property type="match status" value="1"/>
</dbReference>
<dbReference type="Pfam" id="PF15717">
    <property type="entry name" value="PCM1_C"/>
    <property type="match status" value="1"/>
</dbReference>
<reference key="1">
    <citation type="journal article" date="1999" name="J. Cell Biol.">
        <title>Centriolar satellites: molecular characterization, ATP-dependent movement toward centrioles and possible involvement in ciliogenesis.</title>
        <authorList>
            <person name="Kubo A."/>
            <person name="Sasaki H."/>
            <person name="Yuba-Kubo A."/>
            <person name="Tsukita S."/>
            <person name="Shiina N."/>
        </authorList>
    </citation>
    <scope>NUCLEOTIDE SEQUENCE [MRNA] (ISOFORM 1)</scope>
    <scope>SUBCELLULAR LOCATION</scope>
</reference>
<reference key="2">
    <citation type="journal article" date="1999" name="J. Cell Biol.">
        <authorList>
            <person name="Kubo A."/>
            <person name="Sasaki H."/>
            <person name="Yuba-Kubo A."/>
            <person name="Tsukita S."/>
            <person name="Shiina N."/>
        </authorList>
    </citation>
    <scope>ERRATUM OF PUBMED:10579718</scope>
</reference>
<reference key="3">
    <citation type="journal article" date="2009" name="PLoS Biol.">
        <title>Lineage-specific biology revealed by a finished genome assembly of the mouse.</title>
        <authorList>
            <person name="Church D.M."/>
            <person name="Goodstadt L."/>
            <person name="Hillier L.W."/>
            <person name="Zody M.C."/>
            <person name="Goldstein S."/>
            <person name="She X."/>
            <person name="Bult C.J."/>
            <person name="Agarwala R."/>
            <person name="Cherry J.L."/>
            <person name="DiCuccio M."/>
            <person name="Hlavina W."/>
            <person name="Kapustin Y."/>
            <person name="Meric P."/>
            <person name="Maglott D."/>
            <person name="Birtle Z."/>
            <person name="Marques A.C."/>
            <person name="Graves T."/>
            <person name="Zhou S."/>
            <person name="Teague B."/>
            <person name="Potamousis K."/>
            <person name="Churas C."/>
            <person name="Place M."/>
            <person name="Herschleb J."/>
            <person name="Runnheim R."/>
            <person name="Forrest D."/>
            <person name="Amos-Landgraf J."/>
            <person name="Schwartz D.C."/>
            <person name="Cheng Z."/>
            <person name="Lindblad-Toh K."/>
            <person name="Eichler E.E."/>
            <person name="Ponting C.P."/>
        </authorList>
    </citation>
    <scope>NUCLEOTIDE SEQUENCE [LARGE SCALE GENOMIC DNA]</scope>
    <source>
        <strain>C57BL/6J</strain>
    </source>
</reference>
<reference key="4">
    <citation type="journal article" date="2004" name="Genome Res.">
        <title>The status, quality, and expansion of the NIH full-length cDNA project: the Mammalian Gene Collection (MGC).</title>
        <authorList>
            <consortium name="The MGC Project Team"/>
        </authorList>
    </citation>
    <scope>NUCLEOTIDE SEQUENCE [LARGE SCALE MRNA] OF 1-448 (ISOFORM 2)</scope>
    <source>
        <strain>C57BL/6NCr</strain>
        <tissue>Hematopoietic stem cell</tissue>
    </source>
</reference>
<reference key="5">
    <citation type="journal article" date="2005" name="Science">
        <title>The transcriptional landscape of the mammalian genome.</title>
        <authorList>
            <person name="Carninci P."/>
            <person name="Kasukawa T."/>
            <person name="Katayama S."/>
            <person name="Gough J."/>
            <person name="Frith M.C."/>
            <person name="Maeda N."/>
            <person name="Oyama R."/>
            <person name="Ravasi T."/>
            <person name="Lenhard B."/>
            <person name="Wells C."/>
            <person name="Kodzius R."/>
            <person name="Shimokawa K."/>
            <person name="Bajic V.B."/>
            <person name="Brenner S.E."/>
            <person name="Batalov S."/>
            <person name="Forrest A.R."/>
            <person name="Zavolan M."/>
            <person name="Davis M.J."/>
            <person name="Wilming L.G."/>
            <person name="Aidinis V."/>
            <person name="Allen J.E."/>
            <person name="Ambesi-Impiombato A."/>
            <person name="Apweiler R."/>
            <person name="Aturaliya R.N."/>
            <person name="Bailey T.L."/>
            <person name="Bansal M."/>
            <person name="Baxter L."/>
            <person name="Beisel K.W."/>
            <person name="Bersano T."/>
            <person name="Bono H."/>
            <person name="Chalk A.M."/>
            <person name="Chiu K.P."/>
            <person name="Choudhary V."/>
            <person name="Christoffels A."/>
            <person name="Clutterbuck D.R."/>
            <person name="Crowe M.L."/>
            <person name="Dalla E."/>
            <person name="Dalrymple B.P."/>
            <person name="de Bono B."/>
            <person name="Della Gatta G."/>
            <person name="di Bernardo D."/>
            <person name="Down T."/>
            <person name="Engstrom P."/>
            <person name="Fagiolini M."/>
            <person name="Faulkner G."/>
            <person name="Fletcher C.F."/>
            <person name="Fukushima T."/>
            <person name="Furuno M."/>
            <person name="Futaki S."/>
            <person name="Gariboldi M."/>
            <person name="Georgii-Hemming P."/>
            <person name="Gingeras T.R."/>
            <person name="Gojobori T."/>
            <person name="Green R.E."/>
            <person name="Gustincich S."/>
            <person name="Harbers M."/>
            <person name="Hayashi Y."/>
            <person name="Hensch T.K."/>
            <person name="Hirokawa N."/>
            <person name="Hill D."/>
            <person name="Huminiecki L."/>
            <person name="Iacono M."/>
            <person name="Ikeo K."/>
            <person name="Iwama A."/>
            <person name="Ishikawa T."/>
            <person name="Jakt M."/>
            <person name="Kanapin A."/>
            <person name="Katoh M."/>
            <person name="Kawasawa Y."/>
            <person name="Kelso J."/>
            <person name="Kitamura H."/>
            <person name="Kitano H."/>
            <person name="Kollias G."/>
            <person name="Krishnan S.P."/>
            <person name="Kruger A."/>
            <person name="Kummerfeld S.K."/>
            <person name="Kurochkin I.V."/>
            <person name="Lareau L.F."/>
            <person name="Lazarevic D."/>
            <person name="Lipovich L."/>
            <person name="Liu J."/>
            <person name="Liuni S."/>
            <person name="McWilliam S."/>
            <person name="Madan Babu M."/>
            <person name="Madera M."/>
            <person name="Marchionni L."/>
            <person name="Matsuda H."/>
            <person name="Matsuzawa S."/>
            <person name="Miki H."/>
            <person name="Mignone F."/>
            <person name="Miyake S."/>
            <person name="Morris K."/>
            <person name="Mottagui-Tabar S."/>
            <person name="Mulder N."/>
            <person name="Nakano N."/>
            <person name="Nakauchi H."/>
            <person name="Ng P."/>
            <person name="Nilsson R."/>
            <person name="Nishiguchi S."/>
            <person name="Nishikawa S."/>
            <person name="Nori F."/>
            <person name="Ohara O."/>
            <person name="Okazaki Y."/>
            <person name="Orlando V."/>
            <person name="Pang K.C."/>
            <person name="Pavan W.J."/>
            <person name="Pavesi G."/>
            <person name="Pesole G."/>
            <person name="Petrovsky N."/>
            <person name="Piazza S."/>
            <person name="Reed J."/>
            <person name="Reid J.F."/>
            <person name="Ring B.Z."/>
            <person name="Ringwald M."/>
            <person name="Rost B."/>
            <person name="Ruan Y."/>
            <person name="Salzberg S.L."/>
            <person name="Sandelin A."/>
            <person name="Schneider C."/>
            <person name="Schoenbach C."/>
            <person name="Sekiguchi K."/>
            <person name="Semple C.A."/>
            <person name="Seno S."/>
            <person name="Sessa L."/>
            <person name="Sheng Y."/>
            <person name="Shibata Y."/>
            <person name="Shimada H."/>
            <person name="Shimada K."/>
            <person name="Silva D."/>
            <person name="Sinclair B."/>
            <person name="Sperling S."/>
            <person name="Stupka E."/>
            <person name="Sugiura K."/>
            <person name="Sultana R."/>
            <person name="Takenaka Y."/>
            <person name="Taki K."/>
            <person name="Tammoja K."/>
            <person name="Tan S.L."/>
            <person name="Tang S."/>
            <person name="Taylor M.S."/>
            <person name="Tegner J."/>
            <person name="Teichmann S.A."/>
            <person name="Ueda H.R."/>
            <person name="van Nimwegen E."/>
            <person name="Verardo R."/>
            <person name="Wei C.L."/>
            <person name="Yagi K."/>
            <person name="Yamanishi H."/>
            <person name="Zabarovsky E."/>
            <person name="Zhu S."/>
            <person name="Zimmer A."/>
            <person name="Hide W."/>
            <person name="Bult C."/>
            <person name="Grimmond S.M."/>
            <person name="Teasdale R.D."/>
            <person name="Liu E.T."/>
            <person name="Brusic V."/>
            <person name="Quackenbush J."/>
            <person name="Wahlestedt C."/>
            <person name="Mattick J.S."/>
            <person name="Hume D.A."/>
            <person name="Kai C."/>
            <person name="Sasaki D."/>
            <person name="Tomaru Y."/>
            <person name="Fukuda S."/>
            <person name="Kanamori-Katayama M."/>
            <person name="Suzuki M."/>
            <person name="Aoki J."/>
            <person name="Arakawa T."/>
            <person name="Iida J."/>
            <person name="Imamura K."/>
            <person name="Itoh M."/>
            <person name="Kato T."/>
            <person name="Kawaji H."/>
            <person name="Kawagashira N."/>
            <person name="Kawashima T."/>
            <person name="Kojima M."/>
            <person name="Kondo S."/>
            <person name="Konno H."/>
            <person name="Nakano K."/>
            <person name="Ninomiya N."/>
            <person name="Nishio T."/>
            <person name="Okada M."/>
            <person name="Plessy C."/>
            <person name="Shibata K."/>
            <person name="Shiraki T."/>
            <person name="Suzuki S."/>
            <person name="Tagami M."/>
            <person name="Waki K."/>
            <person name="Watahiki A."/>
            <person name="Okamura-Oho Y."/>
            <person name="Suzuki H."/>
            <person name="Kawai J."/>
            <person name="Hayashizaki Y."/>
        </authorList>
    </citation>
    <scope>NUCLEOTIDE SEQUENCE [LARGE SCALE MRNA] OF 1-443 (ISOFORM 2)</scope>
    <scope>NUCLEOTIDE SEQUENCE [LARGE SCALE MRNA] OF 1978-2025 (ISOFORMS 1/2)</scope>
</reference>
<reference key="6">
    <citation type="submission" date="2001-07" db="EMBL/GenBank/DDBJ databases">
        <title>Comparative analysis of an evolutionary chromosomal breakpoint indicates a recent origin for the human 4q telomere.</title>
        <authorList>
            <person name="van Geel M."/>
            <person name="Bolland D.J."/>
            <person name="Carim Todd L."/>
            <person name="Frants R.R."/>
            <person name="Hewitt J.E."/>
            <person name="de Jong P.J."/>
        </authorList>
    </citation>
    <scope>NUCLEOTIDE SEQUENCE [MRNA] OF 1-78 (ISOFORMS 1/2)</scope>
    <scope>NUCLEOTIDE SEQUENCE [MRNA] OF 41-2004 (ISOFORM 2)</scope>
    <scope>NUCLEOTIDE SEQUENCE [MRNA] OF 1922-2025 (ISOFORMS 1/2)</scope>
    <scope>NUCLEOTIDE SEQUENCE [GENOMIC DNA] OF 1193-2025</scope>
    <source>
        <strain>129S6/SvEvTac</strain>
        <strain>C57BL/6J</strain>
        <tissue>Placenta</tissue>
    </source>
</reference>
<reference key="7">
    <citation type="journal article" date="1998" name="Mamm. Genome">
        <title>High-resolution mapping of mouse chromosome 8 identifies an evolutionary chromosomal breakpoint.</title>
        <authorList>
            <person name="Grewal P.K."/>
            <person name="Bolland D.J."/>
            <person name="Todd L.C."/>
            <person name="Hewitt J.E."/>
        </authorList>
    </citation>
    <scope>NUCLEOTIDE SEQUENCE [GENOMIC DNA] OF 1722-1784</scope>
</reference>
<reference key="8">
    <citation type="journal article" date="2002" name="Nature">
        <title>Analysis of the mouse transcriptome based on functional annotation of 60,770 full-length cDNAs.</title>
        <authorList>
            <person name="Okazaki Y."/>
            <person name="Furuno M."/>
            <person name="Kasukawa T."/>
            <person name="Adachi J."/>
            <person name="Bono H."/>
            <person name="Kondo S."/>
            <person name="Nikaido I."/>
            <person name="Osato N."/>
            <person name="Saito R."/>
            <person name="Suzuki H."/>
            <person name="Yamanaka I."/>
            <person name="Kiyosawa H."/>
            <person name="Yagi K."/>
            <person name="Tomaru Y."/>
            <person name="Hasegawa Y."/>
            <person name="Nogami A."/>
            <person name="Schonbach C."/>
            <person name="Gojobori T."/>
            <person name="Baldarelli R."/>
            <person name="Hill D.P."/>
            <person name="Bult C."/>
            <person name="Hume D.A."/>
            <person name="Quackenbush J."/>
            <person name="Schriml L.M."/>
            <person name="Kanapin A."/>
            <person name="Matsuda H."/>
            <person name="Batalov S."/>
            <person name="Beisel K.W."/>
            <person name="Blake J.A."/>
            <person name="Bradt D."/>
            <person name="Brusic V."/>
            <person name="Chothia C."/>
            <person name="Corbani L.E."/>
            <person name="Cousins S."/>
            <person name="Dalla E."/>
            <person name="Dragani T.A."/>
            <person name="Fletcher C.F."/>
            <person name="Forrest A."/>
            <person name="Frazer K.S."/>
            <person name="Gaasterland T."/>
            <person name="Gariboldi M."/>
            <person name="Gissi C."/>
            <person name="Godzik A."/>
            <person name="Gough J."/>
            <person name="Grimmond S."/>
            <person name="Gustincich S."/>
            <person name="Hirokawa N."/>
            <person name="Jackson I.J."/>
            <person name="Jarvis E.D."/>
            <person name="Kanai A."/>
            <person name="Kawaji H."/>
            <person name="Kawasawa Y."/>
            <person name="Kedzierski R.M."/>
            <person name="King B.L."/>
            <person name="Konagaya A."/>
            <person name="Kurochkin I.V."/>
            <person name="Lee Y."/>
            <person name="Lenhard B."/>
            <person name="Lyons P.A."/>
            <person name="Maglott D.R."/>
            <person name="Maltais L."/>
            <person name="Marchionni L."/>
            <person name="McKenzie L."/>
            <person name="Miki H."/>
            <person name="Nagashima T."/>
            <person name="Numata K."/>
            <person name="Okido T."/>
            <person name="Pavan W.J."/>
            <person name="Pertea G."/>
            <person name="Pesole G."/>
            <person name="Petrovsky N."/>
            <person name="Pillai R."/>
            <person name="Pontius J.U."/>
            <person name="Qi D."/>
            <person name="Ramachandran S."/>
            <person name="Ravasi T."/>
            <person name="Reed J.C."/>
            <person name="Reed D.J."/>
            <person name="Reid J."/>
            <person name="Ring B.Z."/>
            <person name="Ringwald M."/>
            <person name="Sandelin A."/>
            <person name="Schneider C."/>
            <person name="Semple C.A."/>
            <person name="Setou M."/>
            <person name="Shimada K."/>
            <person name="Sultana R."/>
            <person name="Takenaka Y."/>
            <person name="Taylor M.S."/>
            <person name="Teasdale R.D."/>
            <person name="Tomita M."/>
            <person name="Verardo R."/>
            <person name="Wagner L."/>
            <person name="Wahlestedt C."/>
            <person name="Wang Y."/>
            <person name="Watanabe Y."/>
            <person name="Wells C."/>
            <person name="Wilming L.G."/>
            <person name="Wynshaw-Boris A."/>
            <person name="Yanagisawa M."/>
            <person name="Yang I."/>
            <person name="Yang L."/>
            <person name="Yuan Z."/>
            <person name="Zavolan M."/>
            <person name="Zhu Y."/>
            <person name="Zimmer A."/>
            <person name="Carninci P."/>
            <person name="Hayatsu N."/>
            <person name="Hirozane-Kishikawa T."/>
            <person name="Konno H."/>
            <person name="Nakamura M."/>
            <person name="Sakazume N."/>
            <person name="Sato K."/>
            <person name="Shiraki T."/>
            <person name="Waki K."/>
            <person name="Kawai J."/>
            <person name="Aizawa K."/>
            <person name="Arakawa T."/>
            <person name="Fukuda S."/>
            <person name="Hara A."/>
            <person name="Hashizume W."/>
            <person name="Imotani K."/>
            <person name="Ishii Y."/>
            <person name="Itoh M."/>
            <person name="Kagawa I."/>
            <person name="Miyazaki A."/>
            <person name="Sakai K."/>
            <person name="Sasaki D."/>
            <person name="Shibata K."/>
            <person name="Shinagawa A."/>
            <person name="Yasunishi A."/>
            <person name="Yoshino M."/>
            <person name="Waterston R."/>
            <person name="Lander E.S."/>
            <person name="Rogers J."/>
            <person name="Birney E."/>
            <person name="Hayashizaki Y."/>
        </authorList>
    </citation>
    <scope>NUCLEOTIDE SEQUENCE [LARGE SCALE MRNA] OF 1779-2005 (ISOFORMS 1/2)</scope>
    <source>
        <strain>C57BL/6J</strain>
        <tissue>Embryo</tissue>
    </source>
</reference>
<reference key="9">
    <citation type="journal article" date="2002" name="Cell Motil. Cytoskeleton">
        <title>Arrest of cell cycle progression during first interphase in murine zygotes microinjected with anti-PCM-1 antibodies.</title>
        <authorList>
            <person name="Balczon R."/>
            <person name="Simerly C."/>
            <person name="Takahashi D."/>
            <person name="Schatten G."/>
        </authorList>
    </citation>
    <scope>FUNCTION</scope>
    <scope>SUBCELLULAR LOCATION</scope>
    <scope>DEVELOPMENTAL STAGE</scope>
</reference>
<reference key="10">
    <citation type="journal article" date="2002" name="J. Cell Biol.">
        <title>Assembly of centrosomal proteins and microtubule organization depends on PCM-1.</title>
        <authorList>
            <person name="Dammermann A."/>
            <person name="Merdes A."/>
        </authorList>
    </citation>
    <scope>SUBCELLULAR LOCATION</scope>
</reference>
<reference key="11">
    <citation type="journal article" date="2003" name="J. Cell Sci.">
        <title>Non-membranous granular organelle consisting of PCM-1: subcellular distribution and cell-cycle-dependent assembly/disassembly.</title>
        <authorList>
            <person name="Kubo A."/>
            <person name="Tsukita S."/>
        </authorList>
    </citation>
    <scope>SUBCELLULAR LOCATION</scope>
</reference>
<reference key="12">
    <citation type="journal article" date="2004" name="Mol. Cell. Proteomics">
        <title>Phosphoproteomic analysis of the developing mouse brain.</title>
        <authorList>
            <person name="Ballif B.A."/>
            <person name="Villen J."/>
            <person name="Beausoleil S.A."/>
            <person name="Schwartz D."/>
            <person name="Gygi S.P."/>
        </authorList>
    </citation>
    <scope>PHOSPHORYLATION [LARGE SCALE ANALYSIS] AT SER-65; SER-1766 AND SER-1769</scope>
    <scope>IDENTIFICATION BY MASS SPECTROMETRY [LARGE SCALE ANALYSIS]</scope>
    <source>
        <tissue>Embryonic brain</tissue>
    </source>
</reference>
<reference key="13">
    <citation type="journal article" date="2004" name="Nat. Genet.">
        <title>The Bardet-Biedl protein BBS4 targets cargo to the pericentriolar region and is required for microtubule anchoring and cell cycle progression.</title>
        <authorList>
            <person name="Kim J.C."/>
            <person name="Badano J.L."/>
            <person name="Sibold S."/>
            <person name="Esmail M.A."/>
            <person name="Hill J."/>
            <person name="Hoskins B.E."/>
            <person name="Leitch C.C."/>
            <person name="Venner K."/>
            <person name="Ansley S.J."/>
            <person name="Ross A.J."/>
            <person name="Leroux M.R."/>
            <person name="Katsanis N."/>
            <person name="Beales P.L."/>
        </authorList>
    </citation>
    <scope>TISSUE SPECIFICITY</scope>
</reference>
<reference key="14">
    <citation type="journal article" date="2007" name="Proc. Natl. Acad. Sci. U.S.A.">
        <title>Large-scale phosphorylation analysis of mouse liver.</title>
        <authorList>
            <person name="Villen J."/>
            <person name="Beausoleil S.A."/>
            <person name="Gerber S.A."/>
            <person name="Gygi S.P."/>
        </authorList>
    </citation>
    <scope>PHOSPHORYLATION [LARGE SCALE ANALYSIS] AT SER-65; SER-69; SER-644; SER-1766 AND SER-1769</scope>
    <scope>IDENTIFICATION BY MASS SPECTROMETRY [LARGE SCALE ANALYSIS]</scope>
    <source>
        <tissue>Liver</tissue>
    </source>
</reference>
<reference key="15">
    <citation type="journal article" date="2008" name="Hum. Mutat.">
        <title>Mutations of the CEP290 gene encoding a centrosomal protein cause Meckel-Gruber syndrome.</title>
        <authorList>
            <person name="Frank V."/>
            <person name="den Hollander A.I."/>
            <person name="Bruechle N.O."/>
            <person name="Zonneveld M.N."/>
            <person name="Nuernberg G."/>
            <person name="Becker C."/>
            <person name="Du Bois G."/>
            <person name="Kendziorra H."/>
            <person name="Roosing S."/>
            <person name="Senderek J."/>
            <person name="Nuernberg P."/>
            <person name="Cremers F.P."/>
            <person name="Zerres K."/>
            <person name="Bergmann C."/>
        </authorList>
    </citation>
    <scope>INTERACTION WITH CEP290</scope>
</reference>
<reference key="16">
    <citation type="journal article" date="2009" name="Immunity">
        <title>The phagosomal proteome in interferon-gamma-activated macrophages.</title>
        <authorList>
            <person name="Trost M."/>
            <person name="English L."/>
            <person name="Lemieux S."/>
            <person name="Courcelles M."/>
            <person name="Desjardins M."/>
            <person name="Thibault P."/>
        </authorList>
    </citation>
    <scope>PHOSPHORYLATION [LARGE SCALE ANALYSIS] AT SER-65</scope>
    <scope>IDENTIFICATION BY MASS SPECTROMETRY [LARGE SCALE ANALYSIS]</scope>
</reference>
<reference key="17">
    <citation type="journal article" date="2009" name="Mol. Cell. Proteomics">
        <title>Large scale localization of protein phosphorylation by use of electron capture dissociation mass spectrometry.</title>
        <authorList>
            <person name="Sweet S.M."/>
            <person name="Bailey C.M."/>
            <person name="Cunningham D.L."/>
            <person name="Heath J.K."/>
            <person name="Cooper H.J."/>
        </authorList>
    </citation>
    <scope>PHOSPHORYLATION [LARGE SCALE ANALYSIS] AT SER-65</scope>
    <scope>IDENTIFICATION BY MASS SPECTROMETRY [LARGE SCALE ANALYSIS]</scope>
    <source>
        <tissue>Embryonic fibroblast</tissue>
    </source>
</reference>
<reference key="18">
    <citation type="journal article" date="2010" name="Cell">
        <title>A tissue-specific atlas of mouse protein phosphorylation and expression.</title>
        <authorList>
            <person name="Huttlin E.L."/>
            <person name="Jedrychowski M.P."/>
            <person name="Elias J.E."/>
            <person name="Goswami T."/>
            <person name="Rad R."/>
            <person name="Beausoleil S.A."/>
            <person name="Villen J."/>
            <person name="Haas W."/>
            <person name="Sowa M.E."/>
            <person name="Gygi S.P."/>
        </authorList>
    </citation>
    <scope>PHOSPHORYLATION [LARGE SCALE ANALYSIS] AT SER-65; SER-68; SER-69; SER-110; SER-116; SER-119; SER-644; SER-859; SER-864; SER-867; SER-870; THR-875; SER-1185; SER-1254; SER-1257; SER-1259; SER-1260; SER-1315; SER-1317; SER-1571; SER-1729; SER-1766; SER-1769; SER-1777 AND SER-1783</scope>
    <scope>IDENTIFICATION BY MASS SPECTROMETRY [LARGE SCALE ANALYSIS]</scope>
    <source>
        <tissue>Brain</tissue>
        <tissue>Brown adipose tissue</tissue>
        <tissue>Heart</tissue>
        <tissue>Kidney</tissue>
        <tissue>Liver</tissue>
        <tissue>Lung</tissue>
        <tissue>Pancreas</tissue>
        <tissue>Spleen</tissue>
        <tissue>Testis</tissue>
    </source>
</reference>
<reference key="19">
    <citation type="journal article" date="2014" name="Mol. Biol. Cell">
        <title>The novel centriolar satellite protein SSX2IP targets Cep290 to the ciliary transition zone.</title>
        <authorList>
            <person name="Klinger M."/>
            <person name="Wang W."/>
            <person name="Kuhns S."/>
            <person name="Baerenz F."/>
            <person name="Draeger-Meurer S."/>
            <person name="Pereira G."/>
            <person name="Gruss O.J."/>
        </authorList>
    </citation>
    <scope>INTERACTION WITH SSX2IP</scope>
</reference>
<reference key="20">
    <citation type="journal article" date="2014" name="Proc. Natl. Acad. Sci. U.S.A.">
        <title>C2cd3 is critical for centriolar distal appendage assembly and ciliary vesicle docking in mammals.</title>
        <authorList>
            <person name="Ye X."/>
            <person name="Zeng H."/>
            <person name="Ning G."/>
            <person name="Reiter J.F."/>
            <person name="Liu A."/>
        </authorList>
    </citation>
    <scope>INTERACTION WITH C2CD3</scope>
</reference>
<reference key="21">
    <citation type="journal article" date="2016" name="Hum. Mol. Genet.">
        <title>OFIP/KIAA0753 forms a complex with OFD1 and FOR20 at pericentriolar satellites and centrosomes and is mutated in one individual with oral-facial-digital syndrome.</title>
        <authorList>
            <person name="Chevrier V."/>
            <person name="Bruel A.L."/>
            <person name="Van Dam T.J."/>
            <person name="Franco B."/>
            <person name="Lo Scalzo M."/>
            <person name="Lembo F."/>
            <person name="Audebert S."/>
            <person name="Baudelet E."/>
            <person name="Isnardon D."/>
            <person name="Bole A."/>
            <person name="Borg J.P."/>
            <person name="Kuentz P."/>
            <person name="Thevenon J."/>
            <person name="Burglen L."/>
            <person name="Faivre L."/>
            <person name="Riviere J.B."/>
            <person name="Huynen M.A."/>
            <person name="Birnbaum D."/>
            <person name="Rosnet O."/>
            <person name="Thauvin-Robinet C."/>
        </authorList>
    </citation>
    <scope>INTERACTION WITH KIAA0753; CEP20 AND OFD1</scope>
</reference>
<reference key="22">
    <citation type="journal article" date="2017" name="J. Biol. Chem.">
        <title>DAZ-interacting Protein 1 (Dzip1) Phosphorylation by Polo-like Kinase 1 (Plk1) Regulates the Centriolar Satellite Localization of the BBSome Protein during the Cell Cycle.</title>
        <authorList>
            <person name="Zhang B."/>
            <person name="Wang G."/>
            <person name="Xu X."/>
            <person name="Yang S."/>
            <person name="Zhuang T."/>
            <person name="Wang G."/>
            <person name="Ren H."/>
            <person name="Cheng S.Y."/>
            <person name="Jiang Q."/>
            <person name="Zhang C."/>
        </authorList>
    </citation>
    <scope>FUNCTION</scope>
    <scope>INTERACTION WITH DZIP1</scope>
</reference>